<organism>
    <name type="scientific">Ornithodoros moubata</name>
    <name type="common">Soft tick</name>
    <name type="synonym">Argasid tick</name>
    <dbReference type="NCBI Taxonomy" id="6938"/>
    <lineage>
        <taxon>Eukaryota</taxon>
        <taxon>Metazoa</taxon>
        <taxon>Ecdysozoa</taxon>
        <taxon>Arthropoda</taxon>
        <taxon>Chelicerata</taxon>
        <taxon>Arachnida</taxon>
        <taxon>Acari</taxon>
        <taxon>Parasitiformes</taxon>
        <taxon>Ixodida</taxon>
        <taxon>Ixodoidea</taxon>
        <taxon>Argasidae</taxon>
        <taxon>Ornithodorinae</taxon>
        <taxon>Ornithodoros</taxon>
    </lineage>
</organism>
<name>KUNPG_ORNMO</name>
<comment type="function">
    <text evidence="3 4 5">Tick salivary platelet aggregation inhibitor that plays an important part in the anti-hemostatic strategy of ticks (PubMed:8120028). Inhibits fibrinogen interaction with platelets (PubMed:8120028). Acts by binding (in a divalent metal ion dependent manner) to the glycoprotein IIb-IIIa receptor (ITGA2B/ITGB3) on the platelet surface and inhibits aggregation induced by ADP (IC(50)=99-104 nM), thrombin, collagen (IC(50)=64 nM) platelet-activating factor and collagen (PubMed:33537548, PubMed:8120028, PubMed:9434779). Interacts to unstimulated platelets (Kd=42.5 nM) and to ADP-stimulated platelets (Kd=39.4 nM) (PubMed:8120028). In contrast to many disintegrins which only interact with the beta-3 subunit, interacts with the two subunits (alpha-IIb and beta-3) (PubMed:8120028, PubMed:9434779). Under flow conditions, reduces and delays platelet adhesion, aggregation, and fibrin formation (PubMed:33537548).</text>
</comment>
<comment type="subcellular location">
    <subcellularLocation>
        <location evidence="4">Secreted</location>
    </subcellularLocation>
</comment>
<comment type="tissue specificity">
    <text evidence="8">Expressed in salivary glands.</text>
</comment>
<proteinExistence type="evidence at protein level"/>
<keyword id="KW-1217">Cell adhesion impairing toxin</keyword>
<keyword id="KW-0903">Direct protein sequencing</keyword>
<keyword id="KW-1199">Hemostasis impairing toxin</keyword>
<keyword id="KW-1201">Platelet aggregation inhibiting toxin</keyword>
<keyword id="KW-0964">Secreted</keyword>
<keyword id="KW-0800">Toxin</keyword>
<protein>
    <recommendedName>
        <fullName evidence="7">Disagregin</fullName>
    </recommendedName>
    <alternativeName>
        <fullName evidence="6">Antihemostatic agent</fullName>
    </alternativeName>
    <alternativeName>
        <fullName evidence="7">Platelet aggregation inhibitor</fullName>
        <shortName evidence="1">PAI</shortName>
    </alternativeName>
</protein>
<sequence length="60" mass="6962">SDDKCQGRPMYGCREDDDSVFGWTYDSNHGQCWKGSYCKHRRQPSNYFASQQECRNTCGA</sequence>
<feature type="chain" id="PRO_0000079919" description="Disagregin" evidence="4">
    <location>
        <begin position="1"/>
        <end position="60"/>
    </location>
</feature>
<feature type="short sequence motif" description="Cell attachment site; atypical" evidence="2">
    <location>
        <begin position="14"/>
        <end position="16"/>
    </location>
</feature>
<feature type="mutagenesis site" description="RGD-disagregin; no change in ability to inhibit platelet aggregation induced by ADP or collagen, and under flow conditions, no change in abrogating platelet adhesion, aggregation, and fibrin formation." evidence="3">
    <original>E</original>
    <variation>G</variation>
    <location>
        <position position="15"/>
    </location>
</feature>
<evidence type="ECO:0000250" key="1">
    <source>
        <dbReference type="UniProtKB" id="Q8MVZ2"/>
    </source>
</evidence>
<evidence type="ECO:0000255" key="2"/>
<evidence type="ECO:0000269" key="3">
    <source>
    </source>
</evidence>
<evidence type="ECO:0000269" key="4">
    <source>
    </source>
</evidence>
<evidence type="ECO:0000269" key="5">
    <source>
    </source>
</evidence>
<evidence type="ECO:0000303" key="6">
    <source>
    </source>
</evidence>
<evidence type="ECO:0000303" key="7">
    <source>
    </source>
</evidence>
<evidence type="ECO:0000305" key="8">
    <source>
    </source>
</evidence>
<reference key="1">
    <citation type="journal article" date="1994" name="J. Biol. Chem.">
        <title>Disagregin is a fibrinogen receptor antagonist lacking the Arg-Gly-Asp sequence from the tick, Ornithodoros moubata.</title>
        <authorList>
            <person name="Karczewski J."/>
            <person name="Endris R."/>
            <person name="Connolly T.M."/>
        </authorList>
    </citation>
    <scope>PROTEIN SEQUENCE</scope>
    <scope>FUNCTION</scope>
    <scope>SUBCELLULAR LOCATION</scope>
    <source>
        <tissue>Salivary gland</tissue>
    </source>
</reference>
<reference key="2">
    <citation type="journal article" date="1997" name="Biochem. Biophys. Res. Commun.">
        <title>The interaction of disagregin with the platelet fibrinogen receptor, glycoprotein IIb-IIIa.</title>
        <authorList>
            <person name="Karczewski J."/>
            <person name="Connolly T.M."/>
        </authorList>
    </citation>
    <scope>FUNCTION</scope>
</reference>
<reference key="3">
    <citation type="journal article" date="2021" name="Res. Pract. Thromb. Haemost.">
        <title>Inhibition of platelet adhesion, thrombus formation, and fibrin formation by a potent alphaIIbbeta3 integrin inhibitor from ticks.</title>
        <authorList>
            <person name="van den Kerkhof D.L."/>
            <person name="Nagy M."/>
            <person name="Wichapong K."/>
            <person name="Brouns S.L.N."/>
            <person name="Heemskerk J.W.M."/>
            <person name="Hackeng T.M."/>
            <person name="Dijkgraaf I."/>
        </authorList>
    </citation>
    <scope>FUNCTION</scope>
    <scope>SYNTHESIS</scope>
    <scope>3D-STRUCTURE MODELING IN COMPLEX WITH ITGA2B/ITGB3</scope>
    <scope>MUTAGENESIS OF GLU-15</scope>
</reference>
<dbReference type="PIR" id="A54369">
    <property type="entry name" value="A54369"/>
</dbReference>
<dbReference type="SMR" id="P36235"/>
<dbReference type="GO" id="GO:0005576">
    <property type="term" value="C:extracellular region"/>
    <property type="evidence" value="ECO:0007669"/>
    <property type="project" value="UniProtKB-SubCell"/>
</dbReference>
<dbReference type="GO" id="GO:0004867">
    <property type="term" value="F:serine-type endopeptidase inhibitor activity"/>
    <property type="evidence" value="ECO:0007669"/>
    <property type="project" value="InterPro"/>
</dbReference>
<dbReference type="GO" id="GO:0090729">
    <property type="term" value="F:toxin activity"/>
    <property type="evidence" value="ECO:0007669"/>
    <property type="project" value="UniProtKB-KW"/>
</dbReference>
<dbReference type="Gene3D" id="4.10.410.10">
    <property type="entry name" value="Pancreatic trypsin inhibitor Kunitz domain"/>
    <property type="match status" value="1"/>
</dbReference>
<dbReference type="InterPro" id="IPR036880">
    <property type="entry name" value="Kunitz_BPTI_sf"/>
</dbReference>
<dbReference type="SUPFAM" id="SSF57362">
    <property type="entry name" value="BPTI-like"/>
    <property type="match status" value="1"/>
</dbReference>
<accession>P36235</accession>